<keyword id="KW-0029">Amino-acid transport</keyword>
<keyword id="KW-0067">ATP-binding</keyword>
<keyword id="KW-1003">Cell membrane</keyword>
<keyword id="KW-0472">Membrane</keyword>
<keyword id="KW-0547">Nucleotide-binding</keyword>
<keyword id="KW-1185">Reference proteome</keyword>
<keyword id="KW-1278">Translocase</keyword>
<keyword id="KW-0813">Transport</keyword>
<evidence type="ECO:0000255" key="1">
    <source>
        <dbReference type="HAMAP-Rule" id="MF_01719"/>
    </source>
</evidence>
<gene>
    <name evidence="1" type="primary">metN1</name>
    <name type="ordered locus">BLi00972</name>
    <name type="ordered locus">BL03180</name>
</gene>
<dbReference type="EC" id="7.4.2.11" evidence="1"/>
<dbReference type="EMBL" id="AE017333">
    <property type="protein sequence ID" value="AAU39880.1"/>
    <property type="molecule type" value="Genomic_DNA"/>
</dbReference>
<dbReference type="EMBL" id="CP000002">
    <property type="protein sequence ID" value="AAU22537.1"/>
    <property type="molecule type" value="Genomic_DNA"/>
</dbReference>
<dbReference type="RefSeq" id="WP_003180043.1">
    <property type="nucleotide sequence ID" value="NC_006322.1"/>
</dbReference>
<dbReference type="SMR" id="Q65M34"/>
<dbReference type="STRING" id="279010.BL03180"/>
<dbReference type="KEGG" id="bld:BLi00972"/>
<dbReference type="KEGG" id="bli:BL03180"/>
<dbReference type="eggNOG" id="COG1135">
    <property type="taxonomic scope" value="Bacteria"/>
</dbReference>
<dbReference type="HOGENOM" id="CLU_000604_1_3_9"/>
<dbReference type="Proteomes" id="UP000000606">
    <property type="component" value="Chromosome"/>
</dbReference>
<dbReference type="GO" id="GO:0005886">
    <property type="term" value="C:plasma membrane"/>
    <property type="evidence" value="ECO:0007669"/>
    <property type="project" value="UniProtKB-SubCell"/>
</dbReference>
<dbReference type="GO" id="GO:0033232">
    <property type="term" value="F:ABC-type D-methionine transporter activity"/>
    <property type="evidence" value="ECO:0007669"/>
    <property type="project" value="UniProtKB-EC"/>
</dbReference>
<dbReference type="GO" id="GO:0005524">
    <property type="term" value="F:ATP binding"/>
    <property type="evidence" value="ECO:0007669"/>
    <property type="project" value="UniProtKB-KW"/>
</dbReference>
<dbReference type="GO" id="GO:0016887">
    <property type="term" value="F:ATP hydrolysis activity"/>
    <property type="evidence" value="ECO:0007669"/>
    <property type="project" value="InterPro"/>
</dbReference>
<dbReference type="CDD" id="cd03258">
    <property type="entry name" value="ABC_MetN_methionine_transporter"/>
    <property type="match status" value="1"/>
</dbReference>
<dbReference type="FunFam" id="3.40.50.300:FF:000056">
    <property type="entry name" value="Cell division ATP-binding protein FtsE"/>
    <property type="match status" value="1"/>
</dbReference>
<dbReference type="Gene3D" id="3.30.70.260">
    <property type="match status" value="1"/>
</dbReference>
<dbReference type="Gene3D" id="3.40.50.300">
    <property type="entry name" value="P-loop containing nucleotide triphosphate hydrolases"/>
    <property type="match status" value="1"/>
</dbReference>
<dbReference type="InterPro" id="IPR003593">
    <property type="entry name" value="AAA+_ATPase"/>
</dbReference>
<dbReference type="InterPro" id="IPR003439">
    <property type="entry name" value="ABC_transporter-like_ATP-bd"/>
</dbReference>
<dbReference type="InterPro" id="IPR017871">
    <property type="entry name" value="ABC_transporter-like_CS"/>
</dbReference>
<dbReference type="InterPro" id="IPR045865">
    <property type="entry name" value="ACT-like_dom_sf"/>
</dbReference>
<dbReference type="InterPro" id="IPR041701">
    <property type="entry name" value="MetN_ABC"/>
</dbReference>
<dbReference type="InterPro" id="IPR050086">
    <property type="entry name" value="MetN_ABC_transporter-like"/>
</dbReference>
<dbReference type="InterPro" id="IPR018449">
    <property type="entry name" value="NIL_domain"/>
</dbReference>
<dbReference type="InterPro" id="IPR027417">
    <property type="entry name" value="P-loop_NTPase"/>
</dbReference>
<dbReference type="PANTHER" id="PTHR43166">
    <property type="entry name" value="AMINO ACID IMPORT ATP-BINDING PROTEIN"/>
    <property type="match status" value="1"/>
</dbReference>
<dbReference type="PANTHER" id="PTHR43166:SF30">
    <property type="entry name" value="METHIONINE IMPORT ATP-BINDING PROTEIN METN"/>
    <property type="match status" value="1"/>
</dbReference>
<dbReference type="Pfam" id="PF00005">
    <property type="entry name" value="ABC_tran"/>
    <property type="match status" value="1"/>
</dbReference>
<dbReference type="Pfam" id="PF09383">
    <property type="entry name" value="NIL"/>
    <property type="match status" value="1"/>
</dbReference>
<dbReference type="SMART" id="SM00382">
    <property type="entry name" value="AAA"/>
    <property type="match status" value="1"/>
</dbReference>
<dbReference type="SMART" id="SM00930">
    <property type="entry name" value="NIL"/>
    <property type="match status" value="1"/>
</dbReference>
<dbReference type="SUPFAM" id="SSF55021">
    <property type="entry name" value="ACT-like"/>
    <property type="match status" value="1"/>
</dbReference>
<dbReference type="SUPFAM" id="SSF52540">
    <property type="entry name" value="P-loop containing nucleoside triphosphate hydrolases"/>
    <property type="match status" value="1"/>
</dbReference>
<dbReference type="PROSITE" id="PS00211">
    <property type="entry name" value="ABC_TRANSPORTER_1"/>
    <property type="match status" value="1"/>
</dbReference>
<dbReference type="PROSITE" id="PS50893">
    <property type="entry name" value="ABC_TRANSPORTER_2"/>
    <property type="match status" value="1"/>
</dbReference>
<dbReference type="PROSITE" id="PS51264">
    <property type="entry name" value="METN"/>
    <property type="match status" value="1"/>
</dbReference>
<reference key="1">
    <citation type="journal article" date="2004" name="J. Mol. Microbiol. Biotechnol.">
        <title>The complete genome sequence of Bacillus licheniformis DSM13, an organism with great industrial potential.</title>
        <authorList>
            <person name="Veith B."/>
            <person name="Herzberg C."/>
            <person name="Steckel S."/>
            <person name="Feesche J."/>
            <person name="Maurer K.H."/>
            <person name="Ehrenreich P."/>
            <person name="Baeumer S."/>
            <person name="Henne A."/>
            <person name="Liesegang H."/>
            <person name="Merkl R."/>
            <person name="Ehrenreich A."/>
            <person name="Gottschalk G."/>
        </authorList>
    </citation>
    <scope>NUCLEOTIDE SEQUENCE [LARGE SCALE GENOMIC DNA]</scope>
    <source>
        <strain>ATCC 14580 / DSM 13 / JCM 2505 / CCUG 7422 / NBRC 12200 / NCIMB 9375 / NCTC 10341 / NRRL NRS-1264 / Gibson 46</strain>
    </source>
</reference>
<reference key="2">
    <citation type="journal article" date="2004" name="Genome Biol.">
        <title>Complete genome sequence of the industrial bacterium Bacillus licheniformis and comparisons with closely related Bacillus species.</title>
        <authorList>
            <person name="Rey M.W."/>
            <person name="Ramaiya P."/>
            <person name="Nelson B.A."/>
            <person name="Brody-Karpin S.D."/>
            <person name="Zaretsky E.J."/>
            <person name="Tang M."/>
            <person name="Lopez de Leon A."/>
            <person name="Xiang H."/>
            <person name="Gusti V."/>
            <person name="Clausen I.G."/>
            <person name="Olsen P.B."/>
            <person name="Rasmussen M.D."/>
            <person name="Andersen J.T."/>
            <person name="Joergensen P.L."/>
            <person name="Larsen T.S."/>
            <person name="Sorokin A."/>
            <person name="Bolotin A."/>
            <person name="Lapidus A."/>
            <person name="Galleron N."/>
            <person name="Ehrlich S.D."/>
            <person name="Berka R.M."/>
        </authorList>
    </citation>
    <scope>NUCLEOTIDE SEQUENCE [LARGE SCALE GENOMIC DNA]</scope>
    <source>
        <strain>ATCC 14580 / DSM 13 / JCM 2505 / CCUG 7422 / NBRC 12200 / NCIMB 9375 / NCTC 10341 / NRRL NRS-1264 / Gibson 46</strain>
    </source>
</reference>
<feature type="chain" id="PRO_0000270245" description="Methionine import ATP-binding protein MetN 1">
    <location>
        <begin position="1"/>
        <end position="333"/>
    </location>
</feature>
<feature type="domain" description="ABC transporter" evidence="1">
    <location>
        <begin position="2"/>
        <end position="241"/>
    </location>
</feature>
<feature type="binding site" evidence="1">
    <location>
        <begin position="38"/>
        <end position="45"/>
    </location>
    <ligand>
        <name>ATP</name>
        <dbReference type="ChEBI" id="CHEBI:30616"/>
    </ligand>
</feature>
<comment type="function">
    <text evidence="1">Part of the ABC transporter complex MetNIQ involved in methionine import. Responsible for energy coupling to the transport system.</text>
</comment>
<comment type="catalytic activity">
    <reaction evidence="1">
        <text>L-methionine(out) + ATP + H2O = L-methionine(in) + ADP + phosphate + H(+)</text>
        <dbReference type="Rhea" id="RHEA:29779"/>
        <dbReference type="ChEBI" id="CHEBI:15377"/>
        <dbReference type="ChEBI" id="CHEBI:15378"/>
        <dbReference type="ChEBI" id="CHEBI:30616"/>
        <dbReference type="ChEBI" id="CHEBI:43474"/>
        <dbReference type="ChEBI" id="CHEBI:57844"/>
        <dbReference type="ChEBI" id="CHEBI:456216"/>
        <dbReference type="EC" id="7.4.2.11"/>
    </reaction>
</comment>
<comment type="catalytic activity">
    <reaction evidence="1">
        <text>D-methionine(out) + ATP + H2O = D-methionine(in) + ADP + phosphate + H(+)</text>
        <dbReference type="Rhea" id="RHEA:29767"/>
        <dbReference type="ChEBI" id="CHEBI:15377"/>
        <dbReference type="ChEBI" id="CHEBI:15378"/>
        <dbReference type="ChEBI" id="CHEBI:30616"/>
        <dbReference type="ChEBI" id="CHEBI:43474"/>
        <dbReference type="ChEBI" id="CHEBI:57932"/>
        <dbReference type="ChEBI" id="CHEBI:456216"/>
        <dbReference type="EC" id="7.4.2.11"/>
    </reaction>
</comment>
<comment type="subunit">
    <text evidence="1">The complex is composed of two ATP-binding proteins (MetN), two transmembrane proteins (MetI) and a solute-binding protein (MetQ).</text>
</comment>
<comment type="subcellular location">
    <subcellularLocation>
        <location evidence="1">Cell membrane</location>
        <topology evidence="1">Peripheral membrane protein</topology>
    </subcellularLocation>
</comment>
<comment type="similarity">
    <text evidence="1">Belongs to the ABC transporter superfamily. Methionine importer (TC 3.A.1.24) family.</text>
</comment>
<accession>Q65M34</accession>
<accession>Q62XH1</accession>
<protein>
    <recommendedName>
        <fullName evidence="1">Methionine import ATP-binding protein MetN 1</fullName>
        <ecNumber evidence="1">7.4.2.11</ecNumber>
    </recommendedName>
</protein>
<name>METN1_BACLD</name>
<proteinExistence type="inferred from homology"/>
<organism>
    <name type="scientific">Bacillus licheniformis (strain ATCC 14580 / DSM 13 / JCM 2505 / CCUG 7422 / NBRC 12200 / NCIMB 9375 / NCTC 10341 / NRRL NRS-1264 / Gibson 46)</name>
    <dbReference type="NCBI Taxonomy" id="279010"/>
    <lineage>
        <taxon>Bacteria</taxon>
        <taxon>Bacillati</taxon>
        <taxon>Bacillota</taxon>
        <taxon>Bacilli</taxon>
        <taxon>Bacillales</taxon>
        <taxon>Bacillaceae</taxon>
        <taxon>Bacillus</taxon>
    </lineage>
</organism>
<sequence>MITFEGVEKVYESGGQKVHALNGIDLHVDKGEIYGVIGFSGAGKSTLIRCVNFLEKPTAGKVFVGGRDLMSLSKAEIRTVKRKIGMVFQHFNLLNSKTIFANVAEPLALVKTPKADIKKKVTELLRFVGLEDKARDYPDQLSGGQKQRVGIARALATNPEVLLCDEATSALDPQTTGDILKLLKRVNEQYNITILLITHEMNVAKEICDKVAVIEKGRIIESGSVFDVFSAPETETAKSFVKSAIDHEIPESIQKLNLKHLYQLQFVGESSGKPFLSQVSKRYDVEVNILHGTITELQGIPFGSMTVELQGEDGEIGRALEYIRRENIRIREV</sequence>